<accession>B0TT23</accession>
<sequence length="119" mass="13654">MPRVKRGVTARARHKKVLKLAKGYYGARSRTYRVAVQAVTKAGQYAYRDRRQKKRQFRQLWIARINAASRQNGLSYSRFINGLKKASIEIDRKILADIAVFDKVVFATLVEKAKDALAK</sequence>
<evidence type="ECO:0000255" key="1">
    <source>
        <dbReference type="HAMAP-Rule" id="MF_00382"/>
    </source>
</evidence>
<evidence type="ECO:0000305" key="2"/>
<comment type="function">
    <text evidence="1">Binds directly to 23S ribosomal RNA and is necessary for the in vitro assembly process of the 50S ribosomal subunit. It is not involved in the protein synthesizing functions of that subunit.</text>
</comment>
<comment type="similarity">
    <text evidence="1">Belongs to the bacterial ribosomal protein bL20 family.</text>
</comment>
<gene>
    <name evidence="1" type="primary">rplT</name>
    <name type="ordered locus">Shal_2023</name>
</gene>
<dbReference type="EMBL" id="CP000931">
    <property type="protein sequence ID" value="ABZ76584.1"/>
    <property type="molecule type" value="Genomic_DNA"/>
</dbReference>
<dbReference type="RefSeq" id="WP_012155496.1">
    <property type="nucleotide sequence ID" value="NC_010334.1"/>
</dbReference>
<dbReference type="SMR" id="B0TT23"/>
<dbReference type="STRING" id="458817.Shal_2023"/>
<dbReference type="KEGG" id="shl:Shal_2023"/>
<dbReference type="eggNOG" id="COG0292">
    <property type="taxonomic scope" value="Bacteria"/>
</dbReference>
<dbReference type="HOGENOM" id="CLU_123265_0_1_6"/>
<dbReference type="OrthoDB" id="9808966at2"/>
<dbReference type="Proteomes" id="UP000001317">
    <property type="component" value="Chromosome"/>
</dbReference>
<dbReference type="GO" id="GO:1990904">
    <property type="term" value="C:ribonucleoprotein complex"/>
    <property type="evidence" value="ECO:0007669"/>
    <property type="project" value="UniProtKB-KW"/>
</dbReference>
<dbReference type="GO" id="GO:0005840">
    <property type="term" value="C:ribosome"/>
    <property type="evidence" value="ECO:0007669"/>
    <property type="project" value="UniProtKB-KW"/>
</dbReference>
<dbReference type="GO" id="GO:0019843">
    <property type="term" value="F:rRNA binding"/>
    <property type="evidence" value="ECO:0007669"/>
    <property type="project" value="UniProtKB-UniRule"/>
</dbReference>
<dbReference type="GO" id="GO:0003735">
    <property type="term" value="F:structural constituent of ribosome"/>
    <property type="evidence" value="ECO:0007669"/>
    <property type="project" value="InterPro"/>
</dbReference>
<dbReference type="GO" id="GO:0000027">
    <property type="term" value="P:ribosomal large subunit assembly"/>
    <property type="evidence" value="ECO:0007669"/>
    <property type="project" value="UniProtKB-UniRule"/>
</dbReference>
<dbReference type="GO" id="GO:0006412">
    <property type="term" value="P:translation"/>
    <property type="evidence" value="ECO:0007669"/>
    <property type="project" value="InterPro"/>
</dbReference>
<dbReference type="CDD" id="cd07026">
    <property type="entry name" value="Ribosomal_L20"/>
    <property type="match status" value="1"/>
</dbReference>
<dbReference type="FunFam" id="1.10.1900.20:FF:000001">
    <property type="entry name" value="50S ribosomal protein L20"/>
    <property type="match status" value="1"/>
</dbReference>
<dbReference type="Gene3D" id="6.10.160.10">
    <property type="match status" value="1"/>
</dbReference>
<dbReference type="Gene3D" id="1.10.1900.20">
    <property type="entry name" value="Ribosomal protein L20"/>
    <property type="match status" value="1"/>
</dbReference>
<dbReference type="HAMAP" id="MF_00382">
    <property type="entry name" value="Ribosomal_bL20"/>
    <property type="match status" value="1"/>
</dbReference>
<dbReference type="InterPro" id="IPR005813">
    <property type="entry name" value="Ribosomal_bL20"/>
</dbReference>
<dbReference type="InterPro" id="IPR049946">
    <property type="entry name" value="RIBOSOMAL_L20_CS"/>
</dbReference>
<dbReference type="InterPro" id="IPR035566">
    <property type="entry name" value="Ribosomal_protein_bL20_C"/>
</dbReference>
<dbReference type="NCBIfam" id="TIGR01032">
    <property type="entry name" value="rplT_bact"/>
    <property type="match status" value="1"/>
</dbReference>
<dbReference type="PANTHER" id="PTHR10986">
    <property type="entry name" value="39S RIBOSOMAL PROTEIN L20"/>
    <property type="match status" value="1"/>
</dbReference>
<dbReference type="Pfam" id="PF00453">
    <property type="entry name" value="Ribosomal_L20"/>
    <property type="match status" value="1"/>
</dbReference>
<dbReference type="PRINTS" id="PR00062">
    <property type="entry name" value="RIBOSOMALL20"/>
</dbReference>
<dbReference type="SUPFAM" id="SSF74731">
    <property type="entry name" value="Ribosomal protein L20"/>
    <property type="match status" value="1"/>
</dbReference>
<dbReference type="PROSITE" id="PS00937">
    <property type="entry name" value="RIBOSOMAL_L20"/>
    <property type="match status" value="1"/>
</dbReference>
<reference key="1">
    <citation type="submission" date="2008-01" db="EMBL/GenBank/DDBJ databases">
        <title>Complete sequence of Shewanella halifaxensis HAW-EB4.</title>
        <authorList>
            <consortium name="US DOE Joint Genome Institute"/>
            <person name="Copeland A."/>
            <person name="Lucas S."/>
            <person name="Lapidus A."/>
            <person name="Glavina del Rio T."/>
            <person name="Dalin E."/>
            <person name="Tice H."/>
            <person name="Bruce D."/>
            <person name="Goodwin L."/>
            <person name="Pitluck S."/>
            <person name="Sims D."/>
            <person name="Brettin T."/>
            <person name="Detter J.C."/>
            <person name="Han C."/>
            <person name="Kuske C.R."/>
            <person name="Schmutz J."/>
            <person name="Larimer F."/>
            <person name="Land M."/>
            <person name="Hauser L."/>
            <person name="Kyrpides N."/>
            <person name="Kim E."/>
            <person name="Zhao J.-S."/>
            <person name="Richardson P."/>
        </authorList>
    </citation>
    <scope>NUCLEOTIDE SEQUENCE [LARGE SCALE GENOMIC DNA]</scope>
    <source>
        <strain>HAW-EB4</strain>
    </source>
</reference>
<proteinExistence type="inferred from homology"/>
<organism>
    <name type="scientific">Shewanella halifaxensis (strain HAW-EB4)</name>
    <dbReference type="NCBI Taxonomy" id="458817"/>
    <lineage>
        <taxon>Bacteria</taxon>
        <taxon>Pseudomonadati</taxon>
        <taxon>Pseudomonadota</taxon>
        <taxon>Gammaproteobacteria</taxon>
        <taxon>Alteromonadales</taxon>
        <taxon>Shewanellaceae</taxon>
        <taxon>Shewanella</taxon>
    </lineage>
</organism>
<protein>
    <recommendedName>
        <fullName evidence="1">Large ribosomal subunit protein bL20</fullName>
    </recommendedName>
    <alternativeName>
        <fullName evidence="2">50S ribosomal protein L20</fullName>
    </alternativeName>
</protein>
<keyword id="KW-0687">Ribonucleoprotein</keyword>
<keyword id="KW-0689">Ribosomal protein</keyword>
<keyword id="KW-0694">RNA-binding</keyword>
<keyword id="KW-0699">rRNA-binding</keyword>
<feature type="chain" id="PRO_1000080095" description="Large ribosomal subunit protein bL20">
    <location>
        <begin position="1"/>
        <end position="119"/>
    </location>
</feature>
<name>RL20_SHEHH</name>